<name>TRBB_RHIRD</name>
<reference key="1">
    <citation type="journal article" date="1996" name="J. Bacteriol.">
        <title>The conjugal transfer system of Agrobacterium tumefaciens octopine-type Ti plasmids is closely related to the transfer system of an IncP plasmid and distantly related to Ti plasmid vir genes.</title>
        <authorList>
            <person name="Alt-Morbe J."/>
            <person name="Stryker J.L."/>
            <person name="Fuqua C."/>
            <person name="Li P.L."/>
            <person name="Farrand S.K."/>
            <person name="Winans S.C."/>
        </authorList>
    </citation>
    <scope>NUCLEOTIDE SEQUENCE [GENOMIC DNA]</scope>
</reference>
<comment type="subcellular location">
    <subcellularLocation>
        <location evidence="2">Cytoplasm</location>
    </subcellularLocation>
</comment>
<comment type="similarity">
    <text evidence="2">Belongs to the GSP E family.</text>
</comment>
<dbReference type="EMBL" id="AF242881">
    <property type="protein sequence ID" value="AAB95094.1"/>
    <property type="molecule type" value="Genomic_DNA"/>
</dbReference>
<dbReference type="RefSeq" id="NP_059760.1">
    <property type="nucleotide sequence ID" value="NC_002377.1"/>
</dbReference>
<dbReference type="RefSeq" id="WP_010892448.1">
    <property type="nucleotide sequence ID" value="NZ_QSNU01000012.1"/>
</dbReference>
<dbReference type="SMR" id="P54907"/>
<dbReference type="eggNOG" id="COG4962">
    <property type="taxonomic scope" value="Bacteria"/>
</dbReference>
<dbReference type="OrthoDB" id="9810761at2"/>
<dbReference type="GO" id="GO:0005737">
    <property type="term" value="C:cytoplasm"/>
    <property type="evidence" value="ECO:0007669"/>
    <property type="project" value="UniProtKB-SubCell"/>
</dbReference>
<dbReference type="GO" id="GO:0005524">
    <property type="term" value="F:ATP binding"/>
    <property type="evidence" value="ECO:0007669"/>
    <property type="project" value="UniProtKB-KW"/>
</dbReference>
<dbReference type="GO" id="GO:0016887">
    <property type="term" value="F:ATP hydrolysis activity"/>
    <property type="evidence" value="ECO:0007669"/>
    <property type="project" value="InterPro"/>
</dbReference>
<dbReference type="CDD" id="cd01130">
    <property type="entry name" value="VirB11-like_ATPase"/>
    <property type="match status" value="1"/>
</dbReference>
<dbReference type="Gene3D" id="3.30.450.90">
    <property type="match status" value="1"/>
</dbReference>
<dbReference type="Gene3D" id="3.40.50.300">
    <property type="entry name" value="P-loop containing nucleotide triphosphate hydrolases"/>
    <property type="match status" value="1"/>
</dbReference>
<dbReference type="InterPro" id="IPR014149">
    <property type="entry name" value="Conjug-transfer_TrbB"/>
</dbReference>
<dbReference type="InterPro" id="IPR027417">
    <property type="entry name" value="P-loop_NTPase"/>
</dbReference>
<dbReference type="InterPro" id="IPR001482">
    <property type="entry name" value="T2SS/T4SS_dom"/>
</dbReference>
<dbReference type="InterPro" id="IPR050921">
    <property type="entry name" value="T4SS_GSP_E_ATPase"/>
</dbReference>
<dbReference type="NCBIfam" id="NF010407">
    <property type="entry name" value="PRK13833.1"/>
    <property type="match status" value="1"/>
</dbReference>
<dbReference type="NCBIfam" id="TIGR02782">
    <property type="entry name" value="TrbB_P"/>
    <property type="match status" value="1"/>
</dbReference>
<dbReference type="PANTHER" id="PTHR30486">
    <property type="entry name" value="TWITCHING MOTILITY PROTEIN PILT"/>
    <property type="match status" value="1"/>
</dbReference>
<dbReference type="PANTHER" id="PTHR30486:SF6">
    <property type="entry name" value="TYPE IV PILUS RETRACTATION ATPASE PILT"/>
    <property type="match status" value="1"/>
</dbReference>
<dbReference type="Pfam" id="PF00437">
    <property type="entry name" value="T2SSE"/>
    <property type="match status" value="1"/>
</dbReference>
<dbReference type="SUPFAM" id="SSF52540">
    <property type="entry name" value="P-loop containing nucleoside triphosphate hydrolases"/>
    <property type="match status" value="1"/>
</dbReference>
<dbReference type="PROSITE" id="PS00662">
    <property type="entry name" value="T2SP_E"/>
    <property type="match status" value="1"/>
</dbReference>
<proteinExistence type="inferred from homology"/>
<gene>
    <name type="primary">trbB</name>
</gene>
<accession>P54907</accession>
<geneLocation type="plasmid">
    <name>pTiA6NC</name>
</geneLocation>
<feature type="chain" id="PRO_0000207300" description="Conjugal transfer protein TrbB">
    <location>
        <begin position="1"/>
        <end position="323"/>
    </location>
</feature>
<feature type="binding site" evidence="1">
    <location>
        <begin position="151"/>
        <end position="158"/>
    </location>
    <ligand>
        <name>ATP</name>
        <dbReference type="ChEBI" id="CHEBI:30616"/>
    </ligand>
</feature>
<protein>
    <recommendedName>
        <fullName>Conjugal transfer protein TrbB</fullName>
    </recommendedName>
</protein>
<keyword id="KW-0067">ATP-binding</keyword>
<keyword id="KW-0184">Conjugation</keyword>
<keyword id="KW-0963">Cytoplasm</keyword>
<keyword id="KW-0547">Nucleotide-binding</keyword>
<keyword id="KW-0614">Plasmid</keyword>
<keyword id="KW-0813">Transport</keyword>
<evidence type="ECO:0000255" key="1"/>
<evidence type="ECO:0000305" key="2"/>
<organism>
    <name type="scientific">Rhizobium radiobacter</name>
    <name type="common">Agrobacterium tumefaciens</name>
    <name type="synonym">Agrobacterium radiobacter</name>
    <dbReference type="NCBI Taxonomy" id="358"/>
    <lineage>
        <taxon>Bacteria</taxon>
        <taxon>Pseudomonadati</taxon>
        <taxon>Pseudomonadota</taxon>
        <taxon>Alphaproteobacteria</taxon>
        <taxon>Hyphomicrobiales</taxon>
        <taxon>Rhizobiaceae</taxon>
        <taxon>Rhizobium/Agrobacterium group</taxon>
        <taxon>Agrobacterium</taxon>
        <taxon>Agrobacterium tumefaciens complex</taxon>
    </lineage>
</organism>
<sequence>MTQLRSHPRLVRKLQDSLGDQLCVALDDATVVEIMLNPDGRLFIERLGHGVVAAGAMTPAAAEVVIGSVAHALQSEADDERPIISGELPIGGHRFEGLLPPIVSGPAFTIRRRASRLIPLDDYVTSKVMTEAQASAIRSAIDSRMNIVISGGTGSGKTTLANAIIAEIVTAAPDDRLVILEDTAEIQCAAENAVSLHTSDTVDMARLLKSTMRLRPDRIIVGEVRDGAALTLLKAWNTGHPGGVTTIHSNTALSALRRLEQLTAEASQQLMQEVIGEAVDLIVSIERSGKGRRVREVIHIEGYRNNHYQTEHYAQIEEDSHVA</sequence>